<gene>
    <name type="primary">ytjB</name>
    <name evidence="3" type="synonym">smp</name>
    <name type="ordered locus">b4387</name>
    <name type="ordered locus">JW4350</name>
</gene>
<dbReference type="EMBL" id="M30784">
    <property type="protein sequence ID" value="AAA24635.1"/>
    <property type="molecule type" value="Genomic_DNA"/>
</dbReference>
<dbReference type="EMBL" id="X03046">
    <property type="protein sequence ID" value="CAA26853.1"/>
    <property type="molecule type" value="Genomic_DNA"/>
</dbReference>
<dbReference type="EMBL" id="U14003">
    <property type="protein sequence ID" value="AAA97283.1"/>
    <property type="molecule type" value="Genomic_DNA"/>
</dbReference>
<dbReference type="EMBL" id="U00096">
    <property type="protein sequence ID" value="AAC77340.1"/>
    <property type="molecule type" value="Genomic_DNA"/>
</dbReference>
<dbReference type="EMBL" id="AP009048">
    <property type="protein sequence ID" value="BAE78376.1"/>
    <property type="molecule type" value="Genomic_DNA"/>
</dbReference>
<dbReference type="EMBL" id="L27665">
    <property type="protein sequence ID" value="AAA21739.1"/>
    <property type="molecule type" value="Genomic_DNA"/>
</dbReference>
<dbReference type="PIR" id="A26227">
    <property type="entry name" value="A26227"/>
</dbReference>
<dbReference type="RefSeq" id="NP_418804.1">
    <property type="nucleotide sequence ID" value="NC_000913.3"/>
</dbReference>
<dbReference type="RefSeq" id="WP_000124615.1">
    <property type="nucleotide sequence ID" value="NZ_STEB01000033.1"/>
</dbReference>
<dbReference type="SMR" id="P0AGC7"/>
<dbReference type="BioGRID" id="4262788">
    <property type="interactions" value="19"/>
</dbReference>
<dbReference type="DIP" id="DIP-35920N"/>
<dbReference type="FunCoup" id="P0AGC7">
    <property type="interactions" value="56"/>
</dbReference>
<dbReference type="IntAct" id="P0AGC7">
    <property type="interactions" value="6"/>
</dbReference>
<dbReference type="STRING" id="511145.b4387"/>
<dbReference type="jPOST" id="P0AGC7"/>
<dbReference type="PaxDb" id="511145-b4387"/>
<dbReference type="EnsemblBacteria" id="AAC77340">
    <property type="protein sequence ID" value="AAC77340"/>
    <property type="gene ID" value="b4387"/>
</dbReference>
<dbReference type="GeneID" id="946089"/>
<dbReference type="KEGG" id="ecj:JW4350"/>
<dbReference type="KEGG" id="eco:b4387"/>
<dbReference type="KEGG" id="ecoc:C3026_23705"/>
<dbReference type="PATRIC" id="fig|1411691.4.peg.2298"/>
<dbReference type="EchoBASE" id="EB0944"/>
<dbReference type="eggNOG" id="COG3726">
    <property type="taxonomic scope" value="Bacteria"/>
</dbReference>
<dbReference type="HOGENOM" id="CLU_093836_0_0_6"/>
<dbReference type="InParanoid" id="P0AGC7"/>
<dbReference type="OMA" id="RQVDNTT"/>
<dbReference type="OrthoDB" id="6506836at2"/>
<dbReference type="PhylomeDB" id="P0AGC7"/>
<dbReference type="BioCyc" id="EcoCyc:EG10951-MONOMER"/>
<dbReference type="PRO" id="PR:P0AGC7"/>
<dbReference type="Proteomes" id="UP000000625">
    <property type="component" value="Chromosome"/>
</dbReference>
<dbReference type="GO" id="GO:0005886">
    <property type="term" value="C:plasma membrane"/>
    <property type="evidence" value="ECO:0007669"/>
    <property type="project" value="UniProtKB-SubCell"/>
</dbReference>
<dbReference type="InterPro" id="IPR019305">
    <property type="entry name" value="Uncharacterised_Smp"/>
</dbReference>
<dbReference type="NCBIfam" id="NF008419">
    <property type="entry name" value="PRK11246.1"/>
    <property type="match status" value="1"/>
</dbReference>
<dbReference type="Pfam" id="PF10144">
    <property type="entry name" value="SMP_2"/>
    <property type="match status" value="1"/>
</dbReference>
<organism>
    <name type="scientific">Escherichia coli (strain K12)</name>
    <dbReference type="NCBI Taxonomy" id="83333"/>
    <lineage>
        <taxon>Bacteria</taxon>
        <taxon>Pseudomonadati</taxon>
        <taxon>Pseudomonadota</taxon>
        <taxon>Gammaproteobacteria</taxon>
        <taxon>Enterobacterales</taxon>
        <taxon>Enterobacteriaceae</taxon>
        <taxon>Escherichia</taxon>
    </lineage>
</organism>
<feature type="signal peptide" evidence="1">
    <location>
        <begin position="1"/>
        <end position="30"/>
    </location>
</feature>
<feature type="chain" id="PRO_0000032802" description="Probable inner membrane protein Smp">
    <location>
        <begin position="31"/>
        <end position="214"/>
    </location>
</feature>
<feature type="transmembrane region" description="Helical" evidence="1">
    <location>
        <begin position="164"/>
        <end position="184"/>
    </location>
</feature>
<keyword id="KW-0997">Cell inner membrane</keyword>
<keyword id="KW-1003">Cell membrane</keyword>
<keyword id="KW-0472">Membrane</keyword>
<keyword id="KW-1185">Reference proteome</keyword>
<keyword id="KW-0732">Signal</keyword>
<keyword id="KW-0812">Transmembrane</keyword>
<keyword id="KW-1133">Transmembrane helix</keyword>
<sequence length="214" mass="24083">MARTKLKFRLHRAVIVLFCLALLVALMQGASWFSQNHQRQRNPQLEELARTLARQVTLNVAPLMRTDSPDEKRIQAILDQLTDESRILDAGVYDEQGDLIARSGESVEVRDRLALDGKKAGGYFNQQIVEPIAGKNGPLGYLRLTLDTHTLATEAQQVDNTTNILRLMLLLSLAIGVVLTRTLLQGKRTRWQQSPFLLTASKPVPEEEESEKKE</sequence>
<accession>P0AGC7</accession>
<accession>P18838</accession>
<accession>Q2M5T0</accession>
<name>SMP_ECOLI</name>
<protein>
    <recommendedName>
        <fullName>Probable inner membrane protein Smp</fullName>
    </recommendedName>
</protein>
<reference key="1">
    <citation type="journal article" date="1989" name="Gene">
        <title>An Escherichia coli membrane protein with a unique signal sequence.</title>
        <authorList>
            <person name="Neuwald A.F."/>
            <person name="Stauffer G.V."/>
        </authorList>
    </citation>
    <scope>NUCLEOTIDE SEQUENCE [GENOMIC DNA]</scope>
    <scope>SUBCELLULAR LOCATION</scope>
    <scope>INDUCTION</scope>
    <scope>POST-TRANSLATIONAL MODIFICATION</scope>
    <scope>DISRUPTION PHENOTYPE</scope>
    <source>
        <strain>K12</strain>
    </source>
</reference>
<reference key="2">
    <citation type="journal article" date="1995" name="Nucleic Acids Res.">
        <title>Analysis of the Escherichia coli genome VI: DNA sequence of the region from 92.8 through 100 minutes.</title>
        <authorList>
            <person name="Burland V.D."/>
            <person name="Plunkett G. III"/>
            <person name="Sofia H.J."/>
            <person name="Daniels D.L."/>
            <person name="Blattner F.R."/>
        </authorList>
    </citation>
    <scope>NUCLEOTIDE SEQUENCE [LARGE SCALE GENOMIC DNA]</scope>
    <source>
        <strain>K12 / MG1655 / ATCC 47076</strain>
    </source>
</reference>
<reference key="3">
    <citation type="journal article" date="1997" name="Science">
        <title>The complete genome sequence of Escherichia coli K-12.</title>
        <authorList>
            <person name="Blattner F.R."/>
            <person name="Plunkett G. III"/>
            <person name="Bloch C.A."/>
            <person name="Perna N.T."/>
            <person name="Burland V."/>
            <person name="Riley M."/>
            <person name="Collado-Vides J."/>
            <person name="Glasner J.D."/>
            <person name="Rode C.K."/>
            <person name="Mayhew G.F."/>
            <person name="Gregor J."/>
            <person name="Davis N.W."/>
            <person name="Kirkpatrick H.A."/>
            <person name="Goeden M.A."/>
            <person name="Rose D.J."/>
            <person name="Mau B."/>
            <person name="Shao Y."/>
        </authorList>
    </citation>
    <scope>NUCLEOTIDE SEQUENCE [LARGE SCALE GENOMIC DNA]</scope>
    <source>
        <strain>K12 / MG1655 / ATCC 47076</strain>
    </source>
</reference>
<reference key="4">
    <citation type="journal article" date="2006" name="Mol. Syst. Biol.">
        <title>Highly accurate genome sequences of Escherichia coli K-12 strains MG1655 and W3110.</title>
        <authorList>
            <person name="Hayashi K."/>
            <person name="Morooka N."/>
            <person name="Yamamoto Y."/>
            <person name="Fujita K."/>
            <person name="Isono K."/>
            <person name="Choi S."/>
            <person name="Ohtsubo E."/>
            <person name="Baba T."/>
            <person name="Wanner B.L."/>
            <person name="Mori H."/>
            <person name="Horiuchi T."/>
        </authorList>
    </citation>
    <scope>NUCLEOTIDE SEQUENCE [LARGE SCALE GENOMIC DNA]</scope>
    <source>
        <strain>K12 / W3110 / ATCC 27325 / DSM 5911</strain>
    </source>
</reference>
<reference key="5">
    <citation type="journal article" date="1994" name="J. Biol. Chem.">
        <title>Identification of the gene encoding lipoate-protein ligase A of Escherichia coli. Molecular cloning and characterization of the lplA gene and gene product.</title>
        <authorList>
            <person name="Morris T.W."/>
            <person name="Reed K.E."/>
            <person name="Cronan J.E. Jr."/>
        </authorList>
    </citation>
    <scope>NUCLEOTIDE SEQUENCE [GENOMIC DNA] OF 198-214</scope>
    <source>
        <strain>K12</strain>
    </source>
</reference>
<proteinExistence type="evidence at transcript level"/>
<evidence type="ECO:0000255" key="1"/>
<evidence type="ECO:0000269" key="2">
    <source>
    </source>
</evidence>
<evidence type="ECO:0000303" key="3">
    <source>
    </source>
</evidence>
<evidence type="ECO:0000305" key="4"/>
<evidence type="ECO:0000305" key="5">
    <source>
    </source>
</evidence>
<comment type="subcellular location">
    <subcellularLocation>
        <location evidence="5">Cell inner membrane</location>
        <topology evidence="1">Single-pass membrane protein</topology>
    </subcellularLocation>
</comment>
<comment type="induction">
    <text evidence="2">The nucleotide sequence of the putative signal may have a regulatory function; it may form a perfect stem-loop (PubMed:2684780).</text>
</comment>
<comment type="PTM">
    <text evidence="5">The signal sequence may not be cleaved.</text>
</comment>
<comment type="disruption phenotype">
    <text evidence="2">No visible phenotype.</text>
</comment>
<comment type="similarity">
    <text evidence="4">Belongs to the Smp family.</text>
</comment>